<protein>
    <recommendedName>
        <fullName evidence="1">Phosphoheptose isomerase</fullName>
        <ecNumber evidence="1">5.3.1.28</ecNumber>
    </recommendedName>
    <alternativeName>
        <fullName evidence="1">Sedoheptulose 7-phosphate isomerase</fullName>
    </alternativeName>
</protein>
<evidence type="ECO:0000255" key="1">
    <source>
        <dbReference type="HAMAP-Rule" id="MF_00067"/>
    </source>
</evidence>
<feature type="chain" id="PRO_1000009069" description="Phosphoheptose isomerase">
    <location>
        <begin position="1"/>
        <end position="194"/>
    </location>
</feature>
<feature type="domain" description="SIS" evidence="1">
    <location>
        <begin position="37"/>
        <end position="194"/>
    </location>
</feature>
<feature type="binding site" evidence="1">
    <location>
        <begin position="52"/>
        <end position="54"/>
    </location>
    <ligand>
        <name>substrate</name>
    </ligand>
</feature>
<feature type="binding site" evidence="1">
    <location>
        <position position="61"/>
    </location>
    <ligand>
        <name>Zn(2+)</name>
        <dbReference type="ChEBI" id="CHEBI:29105"/>
    </ligand>
</feature>
<feature type="binding site" evidence="1">
    <location>
        <position position="65"/>
    </location>
    <ligand>
        <name>substrate</name>
    </ligand>
</feature>
<feature type="binding site" evidence="1">
    <location>
        <position position="65"/>
    </location>
    <ligand>
        <name>Zn(2+)</name>
        <dbReference type="ChEBI" id="CHEBI:29105"/>
    </ligand>
</feature>
<feature type="binding site" evidence="1">
    <location>
        <begin position="93"/>
        <end position="94"/>
    </location>
    <ligand>
        <name>substrate</name>
    </ligand>
</feature>
<feature type="binding site" evidence="1">
    <location>
        <begin position="119"/>
        <end position="121"/>
    </location>
    <ligand>
        <name>substrate</name>
    </ligand>
</feature>
<feature type="binding site" evidence="1">
    <location>
        <position position="124"/>
    </location>
    <ligand>
        <name>substrate</name>
    </ligand>
</feature>
<feature type="binding site" evidence="1">
    <location>
        <position position="172"/>
    </location>
    <ligand>
        <name>substrate</name>
    </ligand>
</feature>
<feature type="binding site" evidence="1">
    <location>
        <position position="172"/>
    </location>
    <ligand>
        <name>Zn(2+)</name>
        <dbReference type="ChEBI" id="CHEBI:29105"/>
    </ligand>
</feature>
<feature type="binding site" evidence="1">
    <location>
        <position position="180"/>
    </location>
    <ligand>
        <name>Zn(2+)</name>
        <dbReference type="ChEBI" id="CHEBI:29105"/>
    </ligand>
</feature>
<gene>
    <name evidence="1" type="primary">gmhA</name>
    <name type="ordered locus">CGSHiEE_06140</name>
</gene>
<dbReference type="EC" id="5.3.1.28" evidence="1"/>
<dbReference type="EMBL" id="CP000671">
    <property type="protein sequence ID" value="ABQ98579.1"/>
    <property type="molecule type" value="Genomic_DNA"/>
</dbReference>
<dbReference type="SMR" id="A5UCS8"/>
<dbReference type="KEGG" id="hip:CGSHiEE_06140"/>
<dbReference type="HOGENOM" id="CLU_080999_4_0_6"/>
<dbReference type="UniPathway" id="UPA00041">
    <property type="reaction ID" value="UER00436"/>
</dbReference>
<dbReference type="GO" id="GO:0005737">
    <property type="term" value="C:cytoplasm"/>
    <property type="evidence" value="ECO:0007669"/>
    <property type="project" value="UniProtKB-SubCell"/>
</dbReference>
<dbReference type="GO" id="GO:0097367">
    <property type="term" value="F:carbohydrate derivative binding"/>
    <property type="evidence" value="ECO:0007669"/>
    <property type="project" value="InterPro"/>
</dbReference>
<dbReference type="GO" id="GO:0008968">
    <property type="term" value="F:D-sedoheptulose 7-phosphate isomerase activity"/>
    <property type="evidence" value="ECO:0007669"/>
    <property type="project" value="UniProtKB-UniRule"/>
</dbReference>
<dbReference type="GO" id="GO:0008270">
    <property type="term" value="F:zinc ion binding"/>
    <property type="evidence" value="ECO:0007669"/>
    <property type="project" value="UniProtKB-UniRule"/>
</dbReference>
<dbReference type="GO" id="GO:0005975">
    <property type="term" value="P:carbohydrate metabolic process"/>
    <property type="evidence" value="ECO:0007669"/>
    <property type="project" value="UniProtKB-UniRule"/>
</dbReference>
<dbReference type="GO" id="GO:2001061">
    <property type="term" value="P:D-glycero-D-manno-heptose 7-phosphate biosynthetic process"/>
    <property type="evidence" value="ECO:0007669"/>
    <property type="project" value="UniProtKB-UniPathway"/>
</dbReference>
<dbReference type="CDD" id="cd05006">
    <property type="entry name" value="SIS_GmhA"/>
    <property type="match status" value="1"/>
</dbReference>
<dbReference type="Gene3D" id="3.40.50.10490">
    <property type="entry name" value="Glucose-6-phosphate isomerase like protein, domain 1"/>
    <property type="match status" value="1"/>
</dbReference>
<dbReference type="HAMAP" id="MF_00067">
    <property type="entry name" value="GmhA"/>
    <property type="match status" value="1"/>
</dbReference>
<dbReference type="InterPro" id="IPR035461">
    <property type="entry name" value="GmhA/DiaA"/>
</dbReference>
<dbReference type="InterPro" id="IPR004515">
    <property type="entry name" value="Phosphoheptose_Isoase"/>
</dbReference>
<dbReference type="InterPro" id="IPR001347">
    <property type="entry name" value="SIS_dom"/>
</dbReference>
<dbReference type="InterPro" id="IPR046348">
    <property type="entry name" value="SIS_dom_sf"/>
</dbReference>
<dbReference type="InterPro" id="IPR050099">
    <property type="entry name" value="SIS_GmhA/DiaA_subfam"/>
</dbReference>
<dbReference type="NCBIfam" id="TIGR00441">
    <property type="entry name" value="gmhA"/>
    <property type="match status" value="1"/>
</dbReference>
<dbReference type="NCBIfam" id="NF001628">
    <property type="entry name" value="PRK00414.1"/>
    <property type="match status" value="1"/>
</dbReference>
<dbReference type="PANTHER" id="PTHR30390:SF7">
    <property type="entry name" value="PHOSPHOHEPTOSE ISOMERASE"/>
    <property type="match status" value="1"/>
</dbReference>
<dbReference type="PANTHER" id="PTHR30390">
    <property type="entry name" value="SEDOHEPTULOSE 7-PHOSPHATE ISOMERASE / DNAA INITIATOR-ASSOCIATING FACTOR FOR REPLICATION INITIATION"/>
    <property type="match status" value="1"/>
</dbReference>
<dbReference type="Pfam" id="PF13580">
    <property type="entry name" value="SIS_2"/>
    <property type="match status" value="1"/>
</dbReference>
<dbReference type="SUPFAM" id="SSF53697">
    <property type="entry name" value="SIS domain"/>
    <property type="match status" value="1"/>
</dbReference>
<dbReference type="PROSITE" id="PS51464">
    <property type="entry name" value="SIS"/>
    <property type="match status" value="1"/>
</dbReference>
<sequence length="194" mass="21391">MYLDQIKAELVEAQDLLNKFISDENNIKLIQEAALLISNSFKQGGKVLSCGNGGSHCDAMHFAEELTGRYRENRPGYPAIAISDASHLSCVSNDFGYEYVFSRYVEAVGQKGDVLFGLSTSGNSKNILNAIEAAKTKGMKVIAMTGKDGGKMAGLADVEIRIPHFRYADRIQEIHIKVIHILMMLIEFEMAKQA</sequence>
<reference key="1">
    <citation type="journal article" date="2007" name="Genome Biol.">
        <title>Characterization and modeling of the Haemophilus influenzae core and supragenomes based on the complete genomic sequences of Rd and 12 clinical nontypeable strains.</title>
        <authorList>
            <person name="Hogg J.S."/>
            <person name="Hu F.Z."/>
            <person name="Janto B."/>
            <person name="Boissy R."/>
            <person name="Hayes J."/>
            <person name="Keefe R."/>
            <person name="Post J.C."/>
            <person name="Ehrlich G.D."/>
        </authorList>
    </citation>
    <scope>NUCLEOTIDE SEQUENCE [LARGE SCALE GENOMIC DNA]</scope>
    <source>
        <strain>PittEE</strain>
    </source>
</reference>
<name>GMHA_HAEIE</name>
<organism>
    <name type="scientific">Haemophilus influenzae (strain PittEE)</name>
    <dbReference type="NCBI Taxonomy" id="374930"/>
    <lineage>
        <taxon>Bacteria</taxon>
        <taxon>Pseudomonadati</taxon>
        <taxon>Pseudomonadota</taxon>
        <taxon>Gammaproteobacteria</taxon>
        <taxon>Pasteurellales</taxon>
        <taxon>Pasteurellaceae</taxon>
        <taxon>Haemophilus</taxon>
    </lineage>
</organism>
<proteinExistence type="inferred from homology"/>
<accession>A5UCS8</accession>
<comment type="function">
    <text evidence="1">Catalyzes the isomerization of sedoheptulose 7-phosphate in D-glycero-D-manno-heptose 7-phosphate.</text>
</comment>
<comment type="catalytic activity">
    <reaction evidence="1">
        <text>2 D-sedoheptulose 7-phosphate = D-glycero-alpha-D-manno-heptose 7-phosphate + D-glycero-beta-D-manno-heptose 7-phosphate</text>
        <dbReference type="Rhea" id="RHEA:27489"/>
        <dbReference type="ChEBI" id="CHEBI:57483"/>
        <dbReference type="ChEBI" id="CHEBI:60203"/>
        <dbReference type="ChEBI" id="CHEBI:60204"/>
        <dbReference type="EC" id="5.3.1.28"/>
    </reaction>
</comment>
<comment type="cofactor">
    <cofactor evidence="1">
        <name>Zn(2+)</name>
        <dbReference type="ChEBI" id="CHEBI:29105"/>
    </cofactor>
    <text evidence="1">Binds 1 zinc ion per subunit.</text>
</comment>
<comment type="pathway">
    <text evidence="1">Carbohydrate biosynthesis; D-glycero-D-manno-heptose 7-phosphate biosynthesis; D-glycero-alpha-D-manno-heptose 7-phosphate and D-glycero-beta-D-manno-heptose 7-phosphate from sedoheptulose 7-phosphate: step 1/1.</text>
</comment>
<comment type="subunit">
    <text evidence="1">Homotetramer.</text>
</comment>
<comment type="subcellular location">
    <subcellularLocation>
        <location evidence="1">Cytoplasm</location>
    </subcellularLocation>
</comment>
<comment type="miscellaneous">
    <text evidence="1">The reaction produces a racemic mixture of D-glycero-alpha-D-manno-heptose 7-phosphate and D-glycero-beta-D-manno-heptose 7-phosphate.</text>
</comment>
<comment type="similarity">
    <text evidence="1">Belongs to the SIS family. GmhA subfamily.</text>
</comment>
<keyword id="KW-0119">Carbohydrate metabolism</keyword>
<keyword id="KW-0963">Cytoplasm</keyword>
<keyword id="KW-0413">Isomerase</keyword>
<keyword id="KW-0479">Metal-binding</keyword>
<keyword id="KW-0862">Zinc</keyword>